<dbReference type="EC" id="3.6.1.9" evidence="1"/>
<dbReference type="EMBL" id="AE017223">
    <property type="protein sequence ID" value="AAX73681.1"/>
    <property type="molecule type" value="Genomic_DNA"/>
</dbReference>
<dbReference type="RefSeq" id="WP_002965530.1">
    <property type="nucleotide sequence ID" value="NC_006932.1"/>
</dbReference>
<dbReference type="SMR" id="Q57FA3"/>
<dbReference type="EnsemblBacteria" id="AAX73681">
    <property type="protein sequence ID" value="AAX73681"/>
    <property type="gene ID" value="BruAb1_0276"/>
</dbReference>
<dbReference type="KEGG" id="bmb:BruAb1_0276"/>
<dbReference type="HOGENOM" id="CLU_040416_2_0_5"/>
<dbReference type="Proteomes" id="UP000000540">
    <property type="component" value="Chromosome I"/>
</dbReference>
<dbReference type="GO" id="GO:0005737">
    <property type="term" value="C:cytoplasm"/>
    <property type="evidence" value="ECO:0007669"/>
    <property type="project" value="UniProtKB-SubCell"/>
</dbReference>
<dbReference type="GO" id="GO:0036218">
    <property type="term" value="F:dTTP diphosphatase activity"/>
    <property type="evidence" value="ECO:0007669"/>
    <property type="project" value="RHEA"/>
</dbReference>
<dbReference type="GO" id="GO:0036221">
    <property type="term" value="F:UTP diphosphatase activity"/>
    <property type="evidence" value="ECO:0007669"/>
    <property type="project" value="RHEA"/>
</dbReference>
<dbReference type="GO" id="GO:0009117">
    <property type="term" value="P:nucleotide metabolic process"/>
    <property type="evidence" value="ECO:0007669"/>
    <property type="project" value="UniProtKB-KW"/>
</dbReference>
<dbReference type="CDD" id="cd00555">
    <property type="entry name" value="Maf"/>
    <property type="match status" value="1"/>
</dbReference>
<dbReference type="Gene3D" id="3.90.950.10">
    <property type="match status" value="1"/>
</dbReference>
<dbReference type="HAMAP" id="MF_00528">
    <property type="entry name" value="Maf"/>
    <property type="match status" value="1"/>
</dbReference>
<dbReference type="InterPro" id="IPR029001">
    <property type="entry name" value="ITPase-like_fam"/>
</dbReference>
<dbReference type="InterPro" id="IPR003697">
    <property type="entry name" value="Maf-like"/>
</dbReference>
<dbReference type="NCBIfam" id="TIGR00172">
    <property type="entry name" value="maf"/>
    <property type="match status" value="1"/>
</dbReference>
<dbReference type="NCBIfam" id="NF002401">
    <property type="entry name" value="PRK01441.1"/>
    <property type="match status" value="1"/>
</dbReference>
<dbReference type="PANTHER" id="PTHR43213">
    <property type="entry name" value="BIFUNCTIONAL DTTP/UTP PYROPHOSPHATASE/METHYLTRANSFERASE PROTEIN-RELATED"/>
    <property type="match status" value="1"/>
</dbReference>
<dbReference type="PANTHER" id="PTHR43213:SF5">
    <property type="entry name" value="BIFUNCTIONAL DTTP_UTP PYROPHOSPHATASE_METHYLTRANSFERASE PROTEIN-RELATED"/>
    <property type="match status" value="1"/>
</dbReference>
<dbReference type="Pfam" id="PF02545">
    <property type="entry name" value="Maf"/>
    <property type="match status" value="1"/>
</dbReference>
<dbReference type="PIRSF" id="PIRSF006305">
    <property type="entry name" value="Maf"/>
    <property type="match status" value="1"/>
</dbReference>
<dbReference type="SUPFAM" id="SSF52972">
    <property type="entry name" value="ITPase-like"/>
    <property type="match status" value="1"/>
</dbReference>
<gene>
    <name type="ordered locus">BruAb1_0276</name>
</gene>
<reference key="1">
    <citation type="journal article" date="2005" name="J. Bacteriol.">
        <title>Completion of the genome sequence of Brucella abortus and comparison to the highly similar genomes of Brucella melitensis and Brucella suis.</title>
        <authorList>
            <person name="Halling S.M."/>
            <person name="Peterson-Burch B.D."/>
            <person name="Bricker B.J."/>
            <person name="Zuerner R.L."/>
            <person name="Qing Z."/>
            <person name="Li L.-L."/>
            <person name="Kapur V."/>
            <person name="Alt D.P."/>
            <person name="Olsen S.C."/>
        </authorList>
    </citation>
    <scope>NUCLEOTIDE SEQUENCE [LARGE SCALE GENOMIC DNA]</scope>
    <source>
        <strain>9-941</strain>
    </source>
</reference>
<proteinExistence type="inferred from homology"/>
<sequence length="208" mass="22639">MNVQHKLVLASGSPRRIELLGQAGIEPDRIHPADIDETPQRAEHPRSLARRLSRDKARKAHEQLQGEAGFSGALVLAADTVVAVGRRILPKAEIEDEARECLRLLSGRTHKVFTGVCLVLPNGNLRQTLVETRLRFERLSRLQINAYLSSGEWRGKAGGYAIQGLAGSFVVKLVGSYTNVVGLPLQETVGLLADGGYPVYANWGTGKV</sequence>
<name>NTPPA_BRUAB</name>
<feature type="chain" id="PRO_0000267259" description="dTTP/UTP pyrophosphatase">
    <location>
        <begin position="1"/>
        <end position="208"/>
    </location>
</feature>
<feature type="region of interest" description="Disordered" evidence="2">
    <location>
        <begin position="28"/>
        <end position="48"/>
    </location>
</feature>
<feature type="active site" description="Proton acceptor" evidence="1">
    <location>
        <position position="79"/>
    </location>
</feature>
<feature type="site" description="Important for substrate specificity" evidence="1">
    <location>
        <position position="15"/>
    </location>
</feature>
<feature type="site" description="Important for substrate specificity" evidence="1">
    <location>
        <position position="80"/>
    </location>
</feature>
<feature type="site" description="Important for substrate specificity" evidence="1">
    <location>
        <position position="163"/>
    </location>
</feature>
<organism>
    <name type="scientific">Brucella abortus biovar 1 (strain 9-941)</name>
    <dbReference type="NCBI Taxonomy" id="262698"/>
    <lineage>
        <taxon>Bacteria</taxon>
        <taxon>Pseudomonadati</taxon>
        <taxon>Pseudomonadota</taxon>
        <taxon>Alphaproteobacteria</taxon>
        <taxon>Hyphomicrobiales</taxon>
        <taxon>Brucellaceae</taxon>
        <taxon>Brucella/Ochrobactrum group</taxon>
        <taxon>Brucella</taxon>
    </lineage>
</organism>
<accession>Q57FA3</accession>
<evidence type="ECO:0000255" key="1">
    <source>
        <dbReference type="HAMAP-Rule" id="MF_00528"/>
    </source>
</evidence>
<evidence type="ECO:0000256" key="2">
    <source>
        <dbReference type="SAM" id="MobiDB-lite"/>
    </source>
</evidence>
<protein>
    <recommendedName>
        <fullName evidence="1">dTTP/UTP pyrophosphatase</fullName>
        <shortName evidence="1">dTTPase/UTPase</shortName>
        <ecNumber evidence="1">3.6.1.9</ecNumber>
    </recommendedName>
    <alternativeName>
        <fullName evidence="1">Nucleoside triphosphate pyrophosphatase</fullName>
    </alternativeName>
    <alternativeName>
        <fullName evidence="1">Nucleotide pyrophosphatase</fullName>
        <shortName evidence="1">Nucleotide PPase</shortName>
    </alternativeName>
</protein>
<keyword id="KW-0963">Cytoplasm</keyword>
<keyword id="KW-0378">Hydrolase</keyword>
<keyword id="KW-0546">Nucleotide metabolism</keyword>
<comment type="function">
    <text evidence="1">Nucleoside triphosphate pyrophosphatase that hydrolyzes dTTP and UTP. May have a dual role in cell division arrest and in preventing the incorporation of modified nucleotides into cellular nucleic acids.</text>
</comment>
<comment type="catalytic activity">
    <reaction evidence="1">
        <text>dTTP + H2O = dTMP + diphosphate + H(+)</text>
        <dbReference type="Rhea" id="RHEA:28534"/>
        <dbReference type="ChEBI" id="CHEBI:15377"/>
        <dbReference type="ChEBI" id="CHEBI:15378"/>
        <dbReference type="ChEBI" id="CHEBI:33019"/>
        <dbReference type="ChEBI" id="CHEBI:37568"/>
        <dbReference type="ChEBI" id="CHEBI:63528"/>
        <dbReference type="EC" id="3.6.1.9"/>
    </reaction>
</comment>
<comment type="catalytic activity">
    <reaction evidence="1">
        <text>UTP + H2O = UMP + diphosphate + H(+)</text>
        <dbReference type="Rhea" id="RHEA:29395"/>
        <dbReference type="ChEBI" id="CHEBI:15377"/>
        <dbReference type="ChEBI" id="CHEBI:15378"/>
        <dbReference type="ChEBI" id="CHEBI:33019"/>
        <dbReference type="ChEBI" id="CHEBI:46398"/>
        <dbReference type="ChEBI" id="CHEBI:57865"/>
        <dbReference type="EC" id="3.6.1.9"/>
    </reaction>
</comment>
<comment type="cofactor">
    <cofactor evidence="1">
        <name>a divalent metal cation</name>
        <dbReference type="ChEBI" id="CHEBI:60240"/>
    </cofactor>
</comment>
<comment type="subcellular location">
    <subcellularLocation>
        <location evidence="1">Cytoplasm</location>
    </subcellularLocation>
</comment>
<comment type="similarity">
    <text evidence="1">Belongs to the Maf family. YhdE subfamily.</text>
</comment>